<reference key="1">
    <citation type="journal article" date="2002" name="J. Bacteriol.">
        <title>Whole-genome comparison of Mycobacterium tuberculosis clinical and laboratory strains.</title>
        <authorList>
            <person name="Fleischmann R.D."/>
            <person name="Alland D."/>
            <person name="Eisen J.A."/>
            <person name="Carpenter L."/>
            <person name="White O."/>
            <person name="Peterson J.D."/>
            <person name="DeBoy R.T."/>
            <person name="Dodson R.J."/>
            <person name="Gwinn M.L."/>
            <person name="Haft D.H."/>
            <person name="Hickey E.K."/>
            <person name="Kolonay J.F."/>
            <person name="Nelson W.C."/>
            <person name="Umayam L.A."/>
            <person name="Ermolaeva M.D."/>
            <person name="Salzberg S.L."/>
            <person name="Delcher A."/>
            <person name="Utterback T.R."/>
            <person name="Weidman J.F."/>
            <person name="Khouri H.M."/>
            <person name="Gill J."/>
            <person name="Mikula A."/>
            <person name="Bishai W."/>
            <person name="Jacobs W.R. Jr."/>
            <person name="Venter J.C."/>
            <person name="Fraser C.M."/>
        </authorList>
    </citation>
    <scope>NUCLEOTIDE SEQUENCE [LARGE SCALE GENOMIC DNA]</scope>
    <source>
        <strain>CDC 1551 / Oshkosh</strain>
    </source>
</reference>
<reference key="2">
    <citation type="journal article" date="2003" name="J. Exp. Med.">
        <title>Inhibition of respiration by nitric oxide induces a Mycobacterium tuberculosis dormancy program.</title>
        <authorList>
            <person name="Voskuil M.I."/>
            <person name="Schnappinger D."/>
            <person name="Visconti K.C."/>
            <person name="Harrell M.I."/>
            <person name="Dolganov G.M."/>
            <person name="Sherman D.R."/>
            <person name="Schoolnik G.K."/>
        </authorList>
    </citation>
    <scope>INDUCTION BY NITRIC OXIDE (NO) AND BY HYPOXIA</scope>
    <scope>DORMANCY REGULON</scope>
    <source>
        <strain>CDC 1551 / Oshkosh</strain>
    </source>
</reference>
<accession>P9WFD4</accession>
<accession>L0TD36</accession>
<accession>O06188</accession>
<accession>Q7D6V6</accession>
<keyword id="KW-0067">ATP-binding</keyword>
<keyword id="KW-0547">Nucleotide-binding</keyword>
<keyword id="KW-1185">Reference proteome</keyword>
<gene>
    <name type="ordered locus">MT2699</name>
</gene>
<proteinExistence type="evidence at transcript level"/>
<evidence type="ECO:0000250" key="1">
    <source>
        <dbReference type="UniProtKB" id="P9WFD7"/>
    </source>
</evidence>
<evidence type="ECO:0000269" key="2">
    <source>
    </source>
</evidence>
<evidence type="ECO:0000305" key="3"/>
<protein>
    <recommendedName>
        <fullName>Universal stress protein MT2699</fullName>
    </recommendedName>
</protein>
<organism>
    <name type="scientific">Mycobacterium tuberculosis (strain CDC 1551 / Oshkosh)</name>
    <dbReference type="NCBI Taxonomy" id="83331"/>
    <lineage>
        <taxon>Bacteria</taxon>
        <taxon>Bacillati</taxon>
        <taxon>Actinomycetota</taxon>
        <taxon>Actinomycetes</taxon>
        <taxon>Mycobacteriales</taxon>
        <taxon>Mycobacteriaceae</taxon>
        <taxon>Mycobacterium</taxon>
        <taxon>Mycobacterium tuberculosis complex</taxon>
    </lineage>
</organism>
<sequence length="272" mass="29400">MSGRGEPTMKTIIVGIDGSHAAITAALWGVDEAISRAVPLRLVSVIKPTHPSPDDYDRDLAHAERSLREAQSAVEAAGKLVKIETDIPRGPAGPVLVEASRDAEMICVGSVGIGRYASSILGSTATELAEKAHCPVAVMRSKVDQPASDINWIVVRMTDAPDNEAVLEYAAREAKLRQAPILALGGRPEELREIPDGEFERRVQDWHHRHPDVRVYPITTHTGIARFLADHDERVQLAVIGGGEAGQLARLVGPSGHPVFRHAECSVLVVRR</sequence>
<feature type="chain" id="PRO_0000428558" description="Universal stress protein MT2699">
    <location>
        <begin position="1"/>
        <end position="272"/>
    </location>
</feature>
<feature type="binding site" evidence="1">
    <location>
        <position position="15"/>
    </location>
    <ligand>
        <name>ATP</name>
        <dbReference type="ChEBI" id="CHEBI:30616"/>
    </ligand>
</feature>
<feature type="binding site" evidence="1">
    <location>
        <begin position="109"/>
        <end position="115"/>
    </location>
    <ligand>
        <name>ATP</name>
        <dbReference type="ChEBI" id="CHEBI:30616"/>
    </ligand>
</feature>
<feature type="binding site" evidence="1">
    <location>
        <begin position="123"/>
        <end position="124"/>
    </location>
    <ligand>
        <name>ATP</name>
        <dbReference type="ChEBI" id="CHEBI:30616"/>
    </ligand>
</feature>
<name>Y2624_MYCTO</name>
<dbReference type="EMBL" id="AE000516">
    <property type="protein sequence ID" value="AAK47015.1"/>
    <property type="molecule type" value="Genomic_DNA"/>
</dbReference>
<dbReference type="PIR" id="G70572">
    <property type="entry name" value="G70572"/>
</dbReference>
<dbReference type="SMR" id="P9WFD4"/>
<dbReference type="KEGG" id="mtc:MT2699"/>
<dbReference type="PATRIC" id="fig|83331.31.peg.2910"/>
<dbReference type="HOGENOM" id="CLU_049301_2_3_11"/>
<dbReference type="Proteomes" id="UP000001020">
    <property type="component" value="Chromosome"/>
</dbReference>
<dbReference type="GO" id="GO:0005524">
    <property type="term" value="F:ATP binding"/>
    <property type="evidence" value="ECO:0007669"/>
    <property type="project" value="UniProtKB-KW"/>
</dbReference>
<dbReference type="CDD" id="cd23944">
    <property type="entry name" value="USP_Rv2623_repeat1"/>
    <property type="match status" value="1"/>
</dbReference>
<dbReference type="FunFam" id="3.40.50.620:FF:000123">
    <property type="entry name" value="Universal stress protein family"/>
    <property type="match status" value="1"/>
</dbReference>
<dbReference type="Gene3D" id="3.40.50.620">
    <property type="entry name" value="HUPs"/>
    <property type="match status" value="2"/>
</dbReference>
<dbReference type="InterPro" id="IPR014729">
    <property type="entry name" value="Rossmann-like_a/b/a_fold"/>
</dbReference>
<dbReference type="InterPro" id="IPR006015">
    <property type="entry name" value="Universal_stress_UspA"/>
</dbReference>
<dbReference type="InterPro" id="IPR006016">
    <property type="entry name" value="UspA"/>
</dbReference>
<dbReference type="PANTHER" id="PTHR46268">
    <property type="entry name" value="STRESS RESPONSE PROTEIN NHAX"/>
    <property type="match status" value="1"/>
</dbReference>
<dbReference type="PANTHER" id="PTHR46268:SF6">
    <property type="entry name" value="UNIVERSAL STRESS PROTEIN UP12"/>
    <property type="match status" value="1"/>
</dbReference>
<dbReference type="Pfam" id="PF00582">
    <property type="entry name" value="Usp"/>
    <property type="match status" value="1"/>
</dbReference>
<dbReference type="PRINTS" id="PR01438">
    <property type="entry name" value="UNVRSLSTRESS"/>
</dbReference>
<dbReference type="SUPFAM" id="SSF52402">
    <property type="entry name" value="Adenine nucleotide alpha hydrolases-like"/>
    <property type="match status" value="2"/>
</dbReference>
<comment type="induction">
    <text evidence="2">A member of the dormancy regulon. Induced in response to reduced oxygen tension (hypoxia) and low levels of nitric oxide (NO).</text>
</comment>
<comment type="similarity">
    <text evidence="3">Belongs to the universal stress protein A family.</text>
</comment>